<comment type="function">
    <text evidence="7 11">Low-affinity receptor for immunoglobulin E (IgE) and CR2/CD21. Has essential roles in the regulation of IgE production and in the differentiation of B cells. On B cells, initiates IgE-dependent antigen uptake and presentation to T cells (PubMed:2167225). On macrophages, upon IgE binding and antigen cross-linking induces intracellular killing of parasites through activation of L-Arginine-nitric oxide pathway (PubMed:7544003).</text>
</comment>
<comment type="subunit">
    <text evidence="4 5 6">Homotrimer. Interacts (via C-type lectin domain) with IGHE (via CH3 region); this interaction regulates IgE homeostasis. Interacts (via the C-terminus) with CR2/CD21 (via Sushi domain 1 and 2) (PubMed:1386409, PubMed:16172256).</text>
</comment>
<comment type="interaction">
    <interactant intactId="EBI-10199985">
        <id>P06734</id>
    </interactant>
    <interactant intactId="EBI-765623">
        <id>P17544</id>
        <label>ATF7</label>
    </interactant>
    <organismsDiffer>false</organismsDiffer>
    <experiments>3</experiments>
</comment>
<comment type="subcellular location">
    <subcellularLocation>
        <location>Cell membrane</location>
        <topology>Single-pass type II membrane protein</topology>
    </subcellularLocation>
    <subcellularLocation>
        <location>Cell membrane</location>
        <topology>Lipid-anchor</topology>
    </subcellularLocation>
    <subcellularLocation>
        <location evidence="10">Secreted</location>
    </subcellularLocation>
    <text>Also exists as a soluble excreted form, sCD23.</text>
</comment>
<comment type="tissue specificity">
    <text evidence="10">Detected in urine (at protein level).</text>
</comment>
<comment type="PTM">
    <text>N- and O-glycosylated.</text>
</comment>
<comment type="PTM">
    <text>The secreted form sCD23 is produced by ADAM10-mediated ectodomain shedding.</text>
</comment>
<comment type="miscellaneous">
    <text>There are two kinds of Fc receptors for IgE, which differ in both structure and function: high affinity receptors on basophils and mast cells and low affinity receptors on lymphocytes and monocytes.</text>
</comment>
<comment type="sequence caution" evidence="12">
    <conflict type="erroneous gene model prediction">
        <sequence resource="EMBL-CDS" id="AAA52433"/>
    </conflict>
</comment>
<comment type="online information" name="Functional Glycomics Gateway - Glycan Binding">
    <link uri="http://www.functionalglycomics.org/glycomics/GBPServlet?&amp;operationType=view&amp;cbpId=cbp_hum_Ctlect_221"/>
    <text>CD23</text>
</comment>
<comment type="online information" name="Atlas of Genetics and Cytogenetics in Oncology and Haematology">
    <link uri="https://atlasgeneticsoncology.org/gene/44222/FCER2"/>
</comment>
<feature type="chain" id="PRO_0000017391" description="Low affinity immunoglobulin epsilon Fc receptor membrane-bound form">
    <location>
        <begin position="1"/>
        <end position="321"/>
    </location>
</feature>
<feature type="chain" id="PRO_0000017392" description="Low affinity immunoglobulin epsilon Fc receptor soluble form">
    <location>
        <begin position="150"/>
        <end position="321"/>
    </location>
</feature>
<feature type="topological domain" description="Cytoplasmic" evidence="1">
    <location>
        <begin position="1"/>
        <end position="21"/>
    </location>
</feature>
<feature type="transmembrane region" description="Helical; Signal-anchor for type II membrane protein" evidence="1">
    <location>
        <begin position="22"/>
        <end position="47"/>
    </location>
</feature>
<feature type="topological domain" description="Extracellular" evidence="1">
    <location>
        <begin position="48"/>
        <end position="321"/>
    </location>
</feature>
<feature type="repeat">
    <location>
        <begin position="69"/>
        <end position="89"/>
    </location>
</feature>
<feature type="repeat">
    <location>
        <begin position="90"/>
        <end position="110"/>
    </location>
</feature>
<feature type="repeat">
    <location>
        <begin position="111"/>
        <end position="131"/>
    </location>
</feature>
<feature type="domain" description="C-type lectin" evidence="2">
    <location>
        <begin position="162"/>
        <end position="284"/>
    </location>
</feature>
<feature type="region of interest" description="Disordered" evidence="3">
    <location>
        <begin position="66"/>
        <end position="85"/>
    </location>
</feature>
<feature type="region of interest" description="Disordered" evidence="3">
    <location>
        <begin position="290"/>
        <end position="321"/>
    </location>
</feature>
<feature type="binding site" evidence="6">
    <location>
        <position position="249"/>
    </location>
    <ligand>
        <name>Ca(2+)</name>
        <dbReference type="ChEBI" id="CHEBI:29108"/>
    </ligand>
</feature>
<feature type="binding site" evidence="6">
    <location>
        <position position="251"/>
    </location>
    <ligand>
        <name>Ca(2+)</name>
        <dbReference type="ChEBI" id="CHEBI:29108"/>
    </ligand>
</feature>
<feature type="binding site" evidence="6">
    <location>
        <position position="269"/>
    </location>
    <ligand>
        <name>Ca(2+)</name>
        <dbReference type="ChEBI" id="CHEBI:29108"/>
    </ligand>
</feature>
<feature type="binding site" evidence="6">
    <location>
        <position position="270"/>
    </location>
    <ligand>
        <name>Ca(2+)</name>
        <dbReference type="ChEBI" id="CHEBI:29108"/>
    </ligand>
</feature>
<feature type="site" description="Cleavage">
    <location>
        <begin position="149"/>
        <end position="150"/>
    </location>
</feature>
<feature type="lipid moiety-binding region" description="S-palmitoyl cysteine" evidence="8">
    <location>
        <position position="17"/>
    </location>
</feature>
<feature type="lipid moiety-binding region" description="S-palmitoyl cysteine" evidence="8">
    <location>
        <position position="18"/>
    </location>
</feature>
<feature type="glycosylation site" description="N-linked (GlcNAc...) asparagine" evidence="1">
    <location>
        <position position="63"/>
    </location>
</feature>
<feature type="glycosylation site" description="O-linked (Xyl...) (chondroitin sulfate) serine" evidence="10">
    <location>
        <position position="296"/>
    </location>
</feature>
<feature type="disulfide bond">
    <location>
        <begin position="160"/>
        <end position="288"/>
    </location>
</feature>
<feature type="disulfide bond">
    <location>
        <begin position="163"/>
        <end position="174"/>
    </location>
</feature>
<feature type="disulfide bond">
    <location>
        <begin position="191"/>
        <end position="282"/>
    </location>
</feature>
<feature type="disulfide bond">
    <location>
        <begin position="259"/>
        <end position="273"/>
    </location>
</feature>
<feature type="sequence variant" id="VAR_035387" description="In dbSNP:rs2228137.">
    <original>R</original>
    <variation>W</variation>
    <location>
        <position position="62"/>
    </location>
</feature>
<feature type="sequence variant" id="VAR_035388" description="In dbSNP:rs8102872.">
    <original>R</original>
    <variation>Q</variation>
    <location>
        <position position="284"/>
    </location>
</feature>
<feature type="sequence variant" id="VAR_069800" evidence="9">
    <original>S</original>
    <variation>F</variation>
    <location>
        <position position="316"/>
    </location>
</feature>
<feature type="sequence conflict" description="In Ref. 3; CAA28465." evidence="12" ref="3">
    <original>N</original>
    <variation>T</variation>
    <location>
        <position position="269"/>
    </location>
</feature>
<feature type="strand" evidence="14">
    <location>
        <begin position="159"/>
        <end position="162"/>
    </location>
</feature>
<feature type="strand" evidence="13">
    <location>
        <begin position="164"/>
        <end position="166"/>
    </location>
</feature>
<feature type="strand" evidence="15">
    <location>
        <begin position="168"/>
        <end position="170"/>
    </location>
</feature>
<feature type="strand" evidence="15">
    <location>
        <begin position="173"/>
        <end position="182"/>
    </location>
</feature>
<feature type="helix" evidence="15">
    <location>
        <begin position="184"/>
        <end position="193"/>
    </location>
</feature>
<feature type="strand" evidence="17">
    <location>
        <begin position="196"/>
        <end position="198"/>
    </location>
</feature>
<feature type="helix" evidence="15">
    <location>
        <begin position="204"/>
        <end position="211"/>
    </location>
</feature>
<feature type="strand" evidence="13">
    <location>
        <begin position="215"/>
        <end position="217"/>
    </location>
</feature>
<feature type="strand" evidence="15">
    <location>
        <begin position="219"/>
        <end position="226"/>
    </location>
</feature>
<feature type="turn" evidence="15">
    <location>
        <begin position="227"/>
        <end position="230"/>
    </location>
</feature>
<feature type="strand" evidence="15">
    <location>
        <begin position="231"/>
        <end position="234"/>
    </location>
</feature>
<feature type="turn" evidence="16">
    <location>
        <begin position="247"/>
        <end position="252"/>
    </location>
</feature>
<feature type="turn" evidence="19">
    <location>
        <begin position="253"/>
        <end position="256"/>
    </location>
</feature>
<feature type="strand" evidence="15">
    <location>
        <begin position="259"/>
        <end position="262"/>
    </location>
</feature>
<feature type="strand" evidence="18">
    <location>
        <begin position="264"/>
        <end position="266"/>
    </location>
</feature>
<feature type="strand" evidence="15">
    <location>
        <begin position="268"/>
        <end position="271"/>
    </location>
</feature>
<feature type="strand" evidence="15">
    <location>
        <begin position="277"/>
        <end position="285"/>
    </location>
</feature>
<feature type="strand" evidence="14">
    <location>
        <begin position="287"/>
        <end position="289"/>
    </location>
</feature>
<feature type="strand" evidence="13">
    <location>
        <begin position="291"/>
        <end position="294"/>
    </location>
</feature>
<name>FCER2_HUMAN</name>
<evidence type="ECO:0000255" key="1"/>
<evidence type="ECO:0000255" key="2">
    <source>
        <dbReference type="PROSITE-ProRule" id="PRU00040"/>
    </source>
</evidence>
<evidence type="ECO:0000256" key="3">
    <source>
        <dbReference type="SAM" id="MobiDB-lite"/>
    </source>
</evidence>
<evidence type="ECO:0000269" key="4">
    <source>
    </source>
</evidence>
<evidence type="ECO:0000269" key="5">
    <source>
    </source>
</evidence>
<evidence type="ECO:0000269" key="6">
    <source>
    </source>
</evidence>
<evidence type="ECO:0000269" key="7">
    <source>
    </source>
</evidence>
<evidence type="ECO:0000269" key="8">
    <source>
    </source>
</evidence>
<evidence type="ECO:0000269" key="9">
    <source>
    </source>
</evidence>
<evidence type="ECO:0000269" key="10">
    <source>
    </source>
</evidence>
<evidence type="ECO:0000269" key="11">
    <source>
    </source>
</evidence>
<evidence type="ECO:0000305" key="12"/>
<evidence type="ECO:0007829" key="13">
    <source>
        <dbReference type="PDB" id="1T8C"/>
    </source>
</evidence>
<evidence type="ECO:0007829" key="14">
    <source>
        <dbReference type="PDB" id="2H2R"/>
    </source>
</evidence>
<evidence type="ECO:0007829" key="15">
    <source>
        <dbReference type="PDB" id="2H2T"/>
    </source>
</evidence>
<evidence type="ECO:0007829" key="16">
    <source>
        <dbReference type="PDB" id="4GK1"/>
    </source>
</evidence>
<evidence type="ECO:0007829" key="17">
    <source>
        <dbReference type="PDB" id="4J6N"/>
    </source>
</evidence>
<evidence type="ECO:0007829" key="18">
    <source>
        <dbReference type="PDB" id="5LGK"/>
    </source>
</evidence>
<evidence type="ECO:0007829" key="19">
    <source>
        <dbReference type="PDB" id="6Y0M"/>
    </source>
</evidence>
<reference key="1">
    <citation type="journal article" date="1987" name="Proc. Natl. Acad. Sci. U.S.A.">
        <title>Human lymphocyte Fc receptor for IgE: sequence homology of its cloned cDNA with animal lectins.</title>
        <authorList>
            <person name="Ikuta K."/>
            <person name="Takami M."/>
            <person name="Kim C.W."/>
            <person name="Honjo T."/>
            <person name="Miyoshi T."/>
            <person name="Tagaya Y."/>
            <person name="Kawabe T."/>
            <person name="Yodoi J."/>
        </authorList>
    </citation>
    <scope>NUCLEOTIDE SEQUENCE [MRNA]</scope>
</reference>
<reference key="2">
    <citation type="journal article" date="1986" name="Cell">
        <title>Molecular structure of human lymphocyte receptor for immunoglobulin E.</title>
        <authorList>
            <person name="Kikutani H."/>
            <person name="Inui S."/>
            <person name="Sato R."/>
            <person name="Barsumian E.L."/>
            <person name="Owaki H."/>
            <person name="Yamasaki K."/>
            <person name="Kaisho T."/>
            <person name="Uchibayashi N."/>
            <person name="Hardy R.R."/>
            <person name="Hirano T."/>
            <person name="Tsunasawa S."/>
            <person name="Sakiyama F."/>
            <person name="Suemura M."/>
            <person name="Kishimoto T."/>
        </authorList>
    </citation>
    <scope>NUCLEOTIDE SEQUENCE [MRNA]</scope>
</reference>
<reference key="3">
    <citation type="journal article" date="1987" name="EMBO J.">
        <title>Cloning and expression of the cDNA coding for a human lymphocyte IgE receptor.</title>
        <authorList>
            <person name="Luedin C."/>
            <person name="Hofstetter H."/>
            <person name="Sarfati M."/>
            <person name="Levy C.A."/>
            <person name="Suter U."/>
            <person name="Alaimo D."/>
            <person name="Kilchherr E."/>
            <person name="Frost H."/>
            <person name="Delespesse G."/>
        </authorList>
    </citation>
    <scope>NUCLEOTIDE SEQUENCE [MRNA]</scope>
</reference>
<reference key="4">
    <citation type="journal article" date="2004" name="Nature">
        <title>The DNA sequence and biology of human chromosome 19.</title>
        <authorList>
            <person name="Grimwood J."/>
            <person name="Gordon L.A."/>
            <person name="Olsen A.S."/>
            <person name="Terry A."/>
            <person name="Schmutz J."/>
            <person name="Lamerdin J.E."/>
            <person name="Hellsten U."/>
            <person name="Goodstein D."/>
            <person name="Couronne O."/>
            <person name="Tran-Gyamfi M."/>
            <person name="Aerts A."/>
            <person name="Altherr M."/>
            <person name="Ashworth L."/>
            <person name="Bajorek E."/>
            <person name="Black S."/>
            <person name="Branscomb E."/>
            <person name="Caenepeel S."/>
            <person name="Carrano A.V."/>
            <person name="Caoile C."/>
            <person name="Chan Y.M."/>
            <person name="Christensen M."/>
            <person name="Cleland C.A."/>
            <person name="Copeland A."/>
            <person name="Dalin E."/>
            <person name="Dehal P."/>
            <person name="Denys M."/>
            <person name="Detter J.C."/>
            <person name="Escobar J."/>
            <person name="Flowers D."/>
            <person name="Fotopulos D."/>
            <person name="Garcia C."/>
            <person name="Georgescu A.M."/>
            <person name="Glavina T."/>
            <person name="Gomez M."/>
            <person name="Gonzales E."/>
            <person name="Groza M."/>
            <person name="Hammon N."/>
            <person name="Hawkins T."/>
            <person name="Haydu L."/>
            <person name="Ho I."/>
            <person name="Huang W."/>
            <person name="Israni S."/>
            <person name="Jett J."/>
            <person name="Kadner K."/>
            <person name="Kimball H."/>
            <person name="Kobayashi A."/>
            <person name="Larionov V."/>
            <person name="Leem S.-H."/>
            <person name="Lopez F."/>
            <person name="Lou Y."/>
            <person name="Lowry S."/>
            <person name="Malfatti S."/>
            <person name="Martinez D."/>
            <person name="McCready P.M."/>
            <person name="Medina C."/>
            <person name="Morgan J."/>
            <person name="Nelson K."/>
            <person name="Nolan M."/>
            <person name="Ovcharenko I."/>
            <person name="Pitluck S."/>
            <person name="Pollard M."/>
            <person name="Popkie A.P."/>
            <person name="Predki P."/>
            <person name="Quan G."/>
            <person name="Ramirez L."/>
            <person name="Rash S."/>
            <person name="Retterer J."/>
            <person name="Rodriguez A."/>
            <person name="Rogers S."/>
            <person name="Salamov A."/>
            <person name="Salazar A."/>
            <person name="She X."/>
            <person name="Smith D."/>
            <person name="Slezak T."/>
            <person name="Solovyev V."/>
            <person name="Thayer N."/>
            <person name="Tice H."/>
            <person name="Tsai M."/>
            <person name="Ustaszewska A."/>
            <person name="Vo N."/>
            <person name="Wagner M."/>
            <person name="Wheeler J."/>
            <person name="Wu K."/>
            <person name="Xie G."/>
            <person name="Yang J."/>
            <person name="Dubchak I."/>
            <person name="Furey T.S."/>
            <person name="DeJong P."/>
            <person name="Dickson M."/>
            <person name="Gordon D."/>
            <person name="Eichler E.E."/>
            <person name="Pennacchio L.A."/>
            <person name="Richardson P."/>
            <person name="Stubbs L."/>
            <person name="Rokhsar D.S."/>
            <person name="Myers R.M."/>
            <person name="Rubin E.M."/>
            <person name="Lucas S.M."/>
        </authorList>
    </citation>
    <scope>NUCLEOTIDE SEQUENCE [LARGE SCALE GENOMIC DNA]</scope>
</reference>
<reference key="5">
    <citation type="journal article" date="2004" name="Genome Res.">
        <title>The status, quality, and expansion of the NIH full-length cDNA project: the Mammalian Gene Collection (MGC).</title>
        <authorList>
            <consortium name="The MGC Project Team"/>
        </authorList>
    </citation>
    <scope>NUCLEOTIDE SEQUENCE [LARGE SCALE MRNA]</scope>
    <source>
        <tissue>B-cell</tissue>
        <tissue>Blood</tissue>
    </source>
</reference>
<reference key="6">
    <citation type="journal article" date="1988" name="Cell">
        <title>Two species of human Fc epsilon receptor II (Fc epsilon RII/CD23): tissue-specific and IL-4-specific regulation of gene expression.</title>
        <authorList>
            <person name="Yokota A."/>
            <person name="Kikutani H."/>
            <person name="Tanaka T."/>
            <person name="Sato R."/>
            <person name="Barsumian E.L."/>
            <person name="Suemura M."/>
            <person name="Kishimoto T."/>
        </authorList>
    </citation>
    <scope>PARTIAL NUCLEOTIDE SEQUENCE [GENOMIC DNA]</scope>
</reference>
<reference key="7">
    <citation type="journal article" date="1992" name="Biochem. J.">
        <title>Partial characterization of natural and recombinant human soluble CD23.</title>
        <authorList>
            <person name="Rose K."/>
            <person name="Turcatti G."/>
            <person name="Graber P."/>
            <person name="Pochon S."/>
            <person name="Regamey P.-O."/>
            <person name="Jansen K.U."/>
            <person name="Magnenat E."/>
            <person name="Aubonney N."/>
            <person name="Bonnefoy J.-Y."/>
        </authorList>
    </citation>
    <scope>PARTIAL PROTEIN SEQUENCE</scope>
    <scope>DISULFIDE BONDS</scope>
</reference>
<reference key="8">
    <citation type="journal article" date="1990" name="Eur. J. Immunol.">
        <title>IgE-dependent antigen focusing by human B lymphocytes is mediated by the low-affinity receptor for IgE.</title>
        <authorList>
            <person name="Pirron U."/>
            <person name="Schlunck T."/>
            <person name="Prinz J.C."/>
            <person name="Rieber E.P."/>
        </authorList>
    </citation>
    <scope>FUNCTION</scope>
</reference>
<reference key="9">
    <citation type="journal article" date="1992" name="Nature">
        <title>CD21 is a ligand for CD23 and regulates IgE production.</title>
        <authorList>
            <person name="Aubry J.P."/>
            <person name="Pochon S."/>
            <person name="Graber P."/>
            <person name="Jansen K.U."/>
            <person name="Bonnefoy J.Y."/>
        </authorList>
    </citation>
    <scope>INTERACTION WITH CR2</scope>
</reference>
<reference key="10">
    <citation type="journal article" date="1995" name="Proc. Natl. Acad. Sci. U.S.A.">
        <title>The killing of Leishmania major by human macrophages is mediated by nitric oxide induced after ligation of the Fc epsilon RII/CD23 surface antigen.</title>
        <authorList>
            <person name="Vouldoukis I."/>
            <person name="Riveros-Moreno V."/>
            <person name="Dugas B."/>
            <person name="Ouaaz F."/>
            <person name="Becherel P."/>
            <person name="Debre P."/>
            <person name="Moncada S."/>
            <person name="Mossalayi M.D."/>
        </authorList>
    </citation>
    <scope>FUNCTION</scope>
</reference>
<reference key="11">
    <citation type="journal article" date="2007" name="J. Biol. Chem.">
        <title>The low affinity IgE receptor (CD23) is cleaved by the metalloproteinase ADAM10.</title>
        <authorList>
            <person name="Lemieux G.A."/>
            <person name="Blumenkron F."/>
            <person name="Yeung N."/>
            <person name="Zhou P."/>
            <person name="Williams J."/>
            <person name="Grammer A.C."/>
            <person name="Petrovich R."/>
            <person name="Lipsky P.E."/>
            <person name="Moss M.L."/>
            <person name="Werb Z."/>
        </authorList>
    </citation>
    <scope>SUBCELLULAR LOCATION</scope>
    <scope>PROTEOLYTIC CLEAVAGE BY ADAM10</scope>
</reference>
<reference key="12">
    <citation type="journal article" date="2012" name="PLoS ONE">
        <title>Proteomic analysis of S-acylated proteins in human B cells reveals palmitoylation of the immune regulators CD20 and CD23.</title>
        <authorList>
            <person name="Ivaldi C."/>
            <person name="Martin B.R."/>
            <person name="Kieffer-Jaquinod S."/>
            <person name="Chapel A."/>
            <person name="Levade T."/>
            <person name="Garin J."/>
            <person name="Journet A."/>
        </authorList>
    </citation>
    <scope>PALMITOYLATION AT CYS-17 AND CYS-18</scope>
    <scope>SUBCELLULAR LOCATION</scope>
    <source>
        <tissue>B-cell</tissue>
    </source>
</reference>
<reference key="13">
    <citation type="journal article" date="2023" name="Mol. Cell. Proteomics">
        <title>Mapping the Human Chondroitin Sulfate Glycoproteome Reveals an Unexpected Correlation Between Glycan Sulfation and Attachment Site Characteristics.</title>
        <authorList>
            <person name="Noborn F."/>
            <person name="Nilsson J."/>
            <person name="Sihlbom C."/>
            <person name="Nikpour M."/>
            <person name="Kjellen L."/>
            <person name="Larson G."/>
        </authorList>
    </citation>
    <scope>SUBCELLULAR LOCATION</scope>
    <scope>TISSUE SPECIFICITY</scope>
    <scope>GLYCOSYLATION AT SER-296</scope>
</reference>
<reference key="14">
    <citation type="journal article" date="1993" name="Receptor">
        <title>Modeling of the lectin-homology domains of the human and murine low-affinity Fc epsilon receptor (Fc epsilon RII/CD23).</title>
        <authorList>
            <person name="Padlan E.A."/>
            <person name="Helm B.A."/>
        </authorList>
    </citation>
    <scope>3D-STRUCTURE MODELING OF LECTIN DOMAIN</scope>
</reference>
<reference key="15">
    <citation type="journal article" date="1996" name="Protein Sci.">
        <title>Structure-based modeling of the ligand binding domain of the human cell surface receptor CD23 and comparison of two independently derived molecular models.</title>
        <authorList>
            <person name="Bajorath J."/>
            <person name="Aruffo A."/>
        </authorList>
    </citation>
    <scope>3D-STRUCTURE MODELING OF 173-285</scope>
</reference>
<reference key="16">
    <citation type="journal article" date="2005" name="J. Exp. Med.">
        <title>The structure of human CD23 and its interactions with IgE and CD21.</title>
        <authorList>
            <person name="Hibbert R.G."/>
            <person name="Teriete P."/>
            <person name="Grundy G.J."/>
            <person name="Beavil R.L."/>
            <person name="Reljic R."/>
            <person name="Holers V.M."/>
            <person name="Hannan J.P."/>
            <person name="Sutton B.J."/>
            <person name="Gould H.J."/>
            <person name="McDonnell J.M."/>
        </authorList>
    </citation>
    <scope>STRUCTURE BY NMR OF 156-298</scope>
    <scope>DISULFIDE BONDS</scope>
    <scope>SUBUNIT</scope>
    <scope>INTERACTION WITH IGHE AND CR2</scope>
</reference>
<reference key="17">
    <citation type="journal article" date="2006" name="Structure">
        <title>Structural changes in the lectin domain of CD23, the low-affinity IgE receptor, upon calcium binding.</title>
        <authorList>
            <person name="Wurzburg B.A."/>
            <person name="Tarchevskaya S.S."/>
            <person name="Jardetzky T.S."/>
        </authorList>
    </citation>
    <scope>X-RAY CRYSTALLOGRAPHY (1.5 ANGSTROMS) OF 150-321 ALONE AND IN COMPLEX WITH CALCIUM</scope>
    <scope>DISULFIDE BONDS</scope>
</reference>
<reference key="18">
    <citation type="journal article" date="2013" name="Ann. Neurol.">
        <title>Mutations in the autoregulatory domain of beta-tubulin 4a cause hereditary dystonia.</title>
        <authorList>
            <person name="Hersheson J."/>
            <person name="Mencacci N.E."/>
            <person name="Davis M."/>
            <person name="Macdonald N."/>
            <person name="Trabzuni D."/>
            <person name="Ryten M."/>
            <person name="Pittman A."/>
            <person name="Paudel R."/>
            <person name="Kara E."/>
            <person name="Fawcett K."/>
            <person name="Plagnol V."/>
            <person name="Bhatia K.P."/>
            <person name="Medlar A.J."/>
            <person name="Stanescu H.C."/>
            <person name="Hardy J."/>
            <person name="Kleta R."/>
            <person name="Wood N.W."/>
            <person name="Houlden H."/>
        </authorList>
    </citation>
    <scope>VARIANT PHE-316</scope>
</reference>
<sequence>MEEGQYSEIEELPRRRCCRRGTQIVLLGLVTAALWAGLLTLLLLWHWDTTQSLKQLEERAARNVSQVSKNLESHHGDQMAQKSQSTQISQELEELRAEQQRLKSQDLELSWNLNGLQADLSSFKSQELNERNEASDLLERLREEVTKLRMELQVSSGFVCNTCPEKWINFQRKCYYFGKGTKQWVHARYACDDMEGQLVSIHSPEEQDFLTKHASHTGSWIGLRNLDLKGEFIWVDGSHVDYSNWAPGEPTSRSQGEDCVMMRGSGRWNDAFCDRKLGAWVCDRLATCTPPASEGSAESMGPDSRPDPDGRLPTPSAPLHS</sequence>
<organism>
    <name type="scientific">Homo sapiens</name>
    <name type="common">Human</name>
    <dbReference type="NCBI Taxonomy" id="9606"/>
    <lineage>
        <taxon>Eukaryota</taxon>
        <taxon>Metazoa</taxon>
        <taxon>Chordata</taxon>
        <taxon>Craniata</taxon>
        <taxon>Vertebrata</taxon>
        <taxon>Euteleostomi</taxon>
        <taxon>Mammalia</taxon>
        <taxon>Eutheria</taxon>
        <taxon>Euarchontoglires</taxon>
        <taxon>Primates</taxon>
        <taxon>Haplorrhini</taxon>
        <taxon>Catarrhini</taxon>
        <taxon>Hominidae</taxon>
        <taxon>Homo</taxon>
    </lineage>
</organism>
<accession>P06734</accession>
<proteinExistence type="evidence at protein level"/>
<protein>
    <recommendedName>
        <fullName>Low affinity immunoglobulin epsilon Fc receptor</fullName>
    </recommendedName>
    <alternativeName>
        <fullName>BLAST-2</fullName>
    </alternativeName>
    <alternativeName>
        <fullName>C-type lectin domain family 4 member J</fullName>
    </alternativeName>
    <alternativeName>
        <fullName>Fc-epsilon-RII</fullName>
    </alternativeName>
    <alternativeName>
        <fullName>Immunoglobulin E-binding factor</fullName>
    </alternativeName>
    <alternativeName>
        <fullName>Lymphocyte IgE receptor</fullName>
    </alternativeName>
    <cdAntigenName>CD23</cdAntigenName>
    <component>
        <recommendedName>
            <fullName>Low affinity immunoglobulin epsilon Fc receptor membrane-bound form</fullName>
        </recommendedName>
    </component>
    <component>
        <recommendedName>
            <fullName>Low affinity immunoglobulin epsilon Fc receptor soluble form</fullName>
        </recommendedName>
    </component>
</protein>
<gene>
    <name type="primary">FCER2</name>
    <name type="synonym">CD23A</name>
    <name type="synonym">CLEC4J</name>
    <name type="synonym">FCE2</name>
    <name type="synonym">IGEBF</name>
</gene>
<keyword id="KW-0002">3D-structure</keyword>
<keyword id="KW-0106">Calcium</keyword>
<keyword id="KW-1003">Cell membrane</keyword>
<keyword id="KW-0903">Direct protein sequencing</keyword>
<keyword id="KW-1015">Disulfide bond</keyword>
<keyword id="KW-0325">Glycoprotein</keyword>
<keyword id="KW-0389">IgE-binding protein</keyword>
<keyword id="KW-0430">Lectin</keyword>
<keyword id="KW-0449">Lipoprotein</keyword>
<keyword id="KW-0472">Membrane</keyword>
<keyword id="KW-0479">Metal-binding</keyword>
<keyword id="KW-0564">Palmitate</keyword>
<keyword id="KW-0654">Proteoglycan</keyword>
<keyword id="KW-1267">Proteomics identification</keyword>
<keyword id="KW-0675">Receptor</keyword>
<keyword id="KW-1185">Reference proteome</keyword>
<keyword id="KW-0677">Repeat</keyword>
<keyword id="KW-0964">Secreted</keyword>
<keyword id="KW-0735">Signal-anchor</keyword>
<keyword id="KW-0812">Transmembrane</keyword>
<keyword id="KW-1133">Transmembrane helix</keyword>
<dbReference type="EMBL" id="M15059">
    <property type="protein sequence ID" value="AAA52434.1"/>
    <property type="molecule type" value="mRNA"/>
</dbReference>
<dbReference type="EMBL" id="M14766">
    <property type="protein sequence ID" value="AAA52435.1"/>
    <property type="molecule type" value="mRNA"/>
</dbReference>
<dbReference type="EMBL" id="X04772">
    <property type="protein sequence ID" value="CAA28465.1"/>
    <property type="molecule type" value="mRNA"/>
</dbReference>
<dbReference type="EMBL" id="AC008763">
    <property type="status" value="NOT_ANNOTATED_CDS"/>
    <property type="molecule type" value="Genomic_DNA"/>
</dbReference>
<dbReference type="EMBL" id="BC014108">
    <property type="protein sequence ID" value="AAH14108.1"/>
    <property type="molecule type" value="mRNA"/>
</dbReference>
<dbReference type="EMBL" id="BC062591">
    <property type="protein sequence ID" value="AAH62591.1"/>
    <property type="molecule type" value="mRNA"/>
</dbReference>
<dbReference type="EMBL" id="M23562">
    <property type="protein sequence ID" value="AAA52433.1"/>
    <property type="status" value="ALT_SEQ"/>
    <property type="molecule type" value="Genomic_DNA"/>
</dbReference>
<dbReference type="CCDS" id="CCDS12184.1"/>
<dbReference type="PIR" id="A26067">
    <property type="entry name" value="LNHUER"/>
</dbReference>
<dbReference type="RefSeq" id="NP_001193948.2">
    <property type="nucleotide sequence ID" value="NM_001207019.2"/>
</dbReference>
<dbReference type="RefSeq" id="NP_001207429.1">
    <property type="nucleotide sequence ID" value="NM_001220500.2"/>
</dbReference>
<dbReference type="RefSeq" id="NP_001993.2">
    <property type="nucleotide sequence ID" value="NM_002002.4"/>
</dbReference>
<dbReference type="RefSeq" id="XP_005272519.1">
    <property type="nucleotide sequence ID" value="XM_005272462.5"/>
</dbReference>
<dbReference type="RefSeq" id="XP_054176173.1">
    <property type="nucleotide sequence ID" value="XM_054320198.1"/>
</dbReference>
<dbReference type="PDB" id="1T8C">
    <property type="method" value="NMR"/>
    <property type="chains" value="A=156-298"/>
</dbReference>
<dbReference type="PDB" id="1T8D">
    <property type="method" value="NMR"/>
    <property type="chains" value="A=156-298"/>
</dbReference>
<dbReference type="PDB" id="2H2R">
    <property type="method" value="X-ray"/>
    <property type="resolution" value="1.50 A"/>
    <property type="chains" value="A/B=150-321"/>
</dbReference>
<dbReference type="PDB" id="2H2T">
    <property type="method" value="X-ray"/>
    <property type="resolution" value="1.30 A"/>
    <property type="chains" value="B=150-321"/>
</dbReference>
<dbReference type="PDB" id="4EZM">
    <property type="method" value="X-ray"/>
    <property type="resolution" value="3.10 A"/>
    <property type="chains" value="G/H/I/J/K/L=156-298"/>
</dbReference>
<dbReference type="PDB" id="4G96">
    <property type="method" value="X-ray"/>
    <property type="resolution" value="2.25 A"/>
    <property type="chains" value="A/B/C/D=156-298"/>
</dbReference>
<dbReference type="PDB" id="4G9A">
    <property type="method" value="X-ray"/>
    <property type="resolution" value="2.00 A"/>
    <property type="chains" value="A/B/C/D=156-298"/>
</dbReference>
<dbReference type="PDB" id="4GI0">
    <property type="method" value="X-ray"/>
    <property type="resolution" value="2.27 A"/>
    <property type="chains" value="A/B/C=156-298"/>
</dbReference>
<dbReference type="PDB" id="4GJ0">
    <property type="method" value="X-ray"/>
    <property type="resolution" value="1.95 A"/>
    <property type="chains" value="A/B/C/D=156-298"/>
</dbReference>
<dbReference type="PDB" id="4GJX">
    <property type="method" value="X-ray"/>
    <property type="resolution" value="2.80 A"/>
    <property type="chains" value="A/B/C/D/E/F/G/H=156-298"/>
</dbReference>
<dbReference type="PDB" id="4GK1">
    <property type="method" value="X-ray"/>
    <property type="resolution" value="2.24 A"/>
    <property type="chains" value="A/B/C/D/E/F/G=156-298"/>
</dbReference>
<dbReference type="PDB" id="4GKO">
    <property type="method" value="X-ray"/>
    <property type="resolution" value="3.30 A"/>
    <property type="chains" value="G/H/I/J/K/L=156-298"/>
</dbReference>
<dbReference type="PDB" id="4J6J">
    <property type="method" value="X-ray"/>
    <property type="resolution" value="1.90 A"/>
    <property type="chains" value="A/B/C/D=156-298"/>
</dbReference>
<dbReference type="PDB" id="4J6K">
    <property type="method" value="X-ray"/>
    <property type="resolution" value="2.30 A"/>
    <property type="chains" value="A/B/C/D/E/F/G/H=156-298"/>
</dbReference>
<dbReference type="PDB" id="4J6L">
    <property type="method" value="X-ray"/>
    <property type="resolution" value="3.15 A"/>
    <property type="chains" value="A/B/C/D/E/F/G/H=156-298"/>
</dbReference>
<dbReference type="PDB" id="4J6M">
    <property type="method" value="X-ray"/>
    <property type="resolution" value="2.48 A"/>
    <property type="chains" value="A/B/C/D/E/F/G/H=156-298"/>
</dbReference>
<dbReference type="PDB" id="4J6N">
    <property type="method" value="X-ray"/>
    <property type="resolution" value="2.85 A"/>
    <property type="chains" value="A/B=156-298"/>
</dbReference>
<dbReference type="PDB" id="4J6P">
    <property type="method" value="X-ray"/>
    <property type="resolution" value="1.90 A"/>
    <property type="chains" value="A/B/C/D=156-298"/>
</dbReference>
<dbReference type="PDB" id="4J6Q">
    <property type="method" value="X-ray"/>
    <property type="resolution" value="2.54 A"/>
    <property type="chains" value="A=156-298"/>
</dbReference>
<dbReference type="PDB" id="4KI1">
    <property type="method" value="X-ray"/>
    <property type="resolution" value="3.20 A"/>
    <property type="chains" value="E/F/G/H=156-298"/>
</dbReference>
<dbReference type="PDB" id="5LGK">
    <property type="method" value="X-ray"/>
    <property type="resolution" value="3.50 A"/>
    <property type="chains" value="E/F=165-284"/>
</dbReference>
<dbReference type="PDB" id="6Y0L">
    <property type="method" value="X-ray"/>
    <property type="resolution" value="1.65 A"/>
    <property type="chains" value="A=156-298"/>
</dbReference>
<dbReference type="PDB" id="6Y0M">
    <property type="method" value="X-ray"/>
    <property type="resolution" value="1.50 A"/>
    <property type="chains" value="A=156-298"/>
</dbReference>
<dbReference type="PDBsum" id="1T8C"/>
<dbReference type="PDBsum" id="1T8D"/>
<dbReference type="PDBsum" id="2H2R"/>
<dbReference type="PDBsum" id="2H2T"/>
<dbReference type="PDBsum" id="4EZM"/>
<dbReference type="PDBsum" id="4G96"/>
<dbReference type="PDBsum" id="4G9A"/>
<dbReference type="PDBsum" id="4GI0"/>
<dbReference type="PDBsum" id="4GJ0"/>
<dbReference type="PDBsum" id="4GJX"/>
<dbReference type="PDBsum" id="4GK1"/>
<dbReference type="PDBsum" id="4GKO"/>
<dbReference type="PDBsum" id="4J6J"/>
<dbReference type="PDBsum" id="4J6K"/>
<dbReference type="PDBsum" id="4J6L"/>
<dbReference type="PDBsum" id="4J6M"/>
<dbReference type="PDBsum" id="4J6N"/>
<dbReference type="PDBsum" id="4J6P"/>
<dbReference type="PDBsum" id="4J6Q"/>
<dbReference type="PDBsum" id="4KI1"/>
<dbReference type="PDBsum" id="5LGK"/>
<dbReference type="PDBsum" id="6Y0L"/>
<dbReference type="PDBsum" id="6Y0M"/>
<dbReference type="BMRB" id="P06734"/>
<dbReference type="SMR" id="P06734"/>
<dbReference type="BioGRID" id="108502">
    <property type="interactions" value="7"/>
</dbReference>
<dbReference type="CORUM" id="P06734"/>
<dbReference type="FunCoup" id="P06734">
    <property type="interactions" value="201"/>
</dbReference>
<dbReference type="IntAct" id="P06734">
    <property type="interactions" value="1"/>
</dbReference>
<dbReference type="STRING" id="9606.ENSP00000264072"/>
<dbReference type="BindingDB" id="P06734"/>
<dbReference type="ChEMBL" id="CHEMBL2940"/>
<dbReference type="DrugBank" id="DB06162">
    <property type="generic name" value="Lumiliximab"/>
</dbReference>
<dbReference type="GuidetoPHARMACOLOGY" id="2935"/>
<dbReference type="UniLectin" id="P06734"/>
<dbReference type="GlyCosmos" id="P06734">
    <property type="glycosylation" value="2 sites, 1 glycan"/>
</dbReference>
<dbReference type="GlyGen" id="P06734">
    <property type="glycosylation" value="3 sites, 1 O-linked glycan (1 site)"/>
</dbReference>
<dbReference type="iPTMnet" id="P06734"/>
<dbReference type="PhosphoSitePlus" id="P06734"/>
<dbReference type="SwissPalm" id="P06734"/>
<dbReference type="BioMuta" id="FCER2"/>
<dbReference type="DMDM" id="119862"/>
<dbReference type="MassIVE" id="P06734"/>
<dbReference type="PaxDb" id="9606-ENSP00000264072"/>
<dbReference type="PeptideAtlas" id="P06734"/>
<dbReference type="ProteomicsDB" id="51921"/>
<dbReference type="ABCD" id="P06734">
    <property type="antibodies" value="1 sequenced antibody"/>
</dbReference>
<dbReference type="Antibodypedia" id="2294">
    <property type="antibodies" value="1913 antibodies from 52 providers"/>
</dbReference>
<dbReference type="DNASU" id="2208"/>
<dbReference type="Ensembl" id="ENST00000346664.9">
    <property type="protein sequence ID" value="ENSP00000264072.6"/>
    <property type="gene ID" value="ENSG00000104921.15"/>
</dbReference>
<dbReference type="Ensembl" id="ENST00000597921.6">
    <property type="protein sequence ID" value="ENSP00000471974.1"/>
    <property type="gene ID" value="ENSG00000104921.15"/>
</dbReference>
<dbReference type="GeneID" id="2208"/>
<dbReference type="KEGG" id="hsa:2208"/>
<dbReference type="MANE-Select" id="ENST00000597921.6">
    <property type="protein sequence ID" value="ENSP00000471974.1"/>
    <property type="RefSeq nucleotide sequence ID" value="NM_001220500.2"/>
    <property type="RefSeq protein sequence ID" value="NP_001207429.1"/>
</dbReference>
<dbReference type="UCSC" id="uc002mhm.3">
    <property type="organism name" value="human"/>
</dbReference>
<dbReference type="AGR" id="HGNC:3612"/>
<dbReference type="CTD" id="2208"/>
<dbReference type="DisGeNET" id="2208"/>
<dbReference type="GeneCards" id="FCER2"/>
<dbReference type="HGNC" id="HGNC:3612">
    <property type="gene designation" value="FCER2"/>
</dbReference>
<dbReference type="HPA" id="ENSG00000104921">
    <property type="expression patterns" value="Tissue enriched (lymphoid)"/>
</dbReference>
<dbReference type="MIM" id="151445">
    <property type="type" value="gene"/>
</dbReference>
<dbReference type="neXtProt" id="NX_P06734"/>
<dbReference type="OpenTargets" id="ENSG00000104921"/>
<dbReference type="PharmGKB" id="PA28058"/>
<dbReference type="VEuPathDB" id="HostDB:ENSG00000104921"/>
<dbReference type="eggNOG" id="KOG4297">
    <property type="taxonomic scope" value="Eukaryota"/>
</dbReference>
<dbReference type="GeneTree" id="ENSGT00940000162574"/>
<dbReference type="HOGENOM" id="CLU_049894_7_2_1"/>
<dbReference type="InParanoid" id="P06734"/>
<dbReference type="OMA" id="PRKRCCG"/>
<dbReference type="OrthoDB" id="418245at2759"/>
<dbReference type="PAN-GO" id="P06734">
    <property type="GO annotations" value="3 GO annotations based on evolutionary models"/>
</dbReference>
<dbReference type="PhylomeDB" id="P06734"/>
<dbReference type="TreeFam" id="TF333341"/>
<dbReference type="PathwayCommons" id="P06734"/>
<dbReference type="Reactome" id="R-HSA-2197563">
    <property type="pathway name" value="NOTCH2 intracellular domain regulates transcription"/>
</dbReference>
<dbReference type="Reactome" id="R-HSA-6783783">
    <property type="pathway name" value="Interleukin-10 signaling"/>
</dbReference>
<dbReference type="Reactome" id="R-HSA-6785807">
    <property type="pathway name" value="Interleukin-4 and Interleukin-13 signaling"/>
</dbReference>
<dbReference type="SignaLink" id="P06734"/>
<dbReference type="SIGNOR" id="P06734"/>
<dbReference type="BioGRID-ORCS" id="2208">
    <property type="hits" value="8 hits in 1144 CRISPR screens"/>
</dbReference>
<dbReference type="EvolutionaryTrace" id="P06734"/>
<dbReference type="GeneWiki" id="CD23"/>
<dbReference type="GenomeRNAi" id="2208"/>
<dbReference type="Pharos" id="P06734">
    <property type="development level" value="Tchem"/>
</dbReference>
<dbReference type="PRO" id="PR:P06734"/>
<dbReference type="Proteomes" id="UP000005640">
    <property type="component" value="Chromosome 19"/>
</dbReference>
<dbReference type="RNAct" id="P06734">
    <property type="molecule type" value="protein"/>
</dbReference>
<dbReference type="Bgee" id="ENSG00000104921">
    <property type="expression patterns" value="Expressed in male germ line stem cell (sensu Vertebrata) in testis and 111 other cell types or tissues"/>
</dbReference>
<dbReference type="ExpressionAtlas" id="P06734">
    <property type="expression patterns" value="baseline and differential"/>
</dbReference>
<dbReference type="GO" id="GO:0009897">
    <property type="term" value="C:external side of plasma membrane"/>
    <property type="evidence" value="ECO:0000318"/>
    <property type="project" value="GO_Central"/>
</dbReference>
<dbReference type="GO" id="GO:0070062">
    <property type="term" value="C:extracellular exosome"/>
    <property type="evidence" value="ECO:0007005"/>
    <property type="project" value="UniProtKB"/>
</dbReference>
<dbReference type="GO" id="GO:0005886">
    <property type="term" value="C:plasma membrane"/>
    <property type="evidence" value="ECO:0000314"/>
    <property type="project" value="UniProtKB"/>
</dbReference>
<dbReference type="GO" id="GO:0030246">
    <property type="term" value="F:carbohydrate binding"/>
    <property type="evidence" value="ECO:0000318"/>
    <property type="project" value="GO_Central"/>
</dbReference>
<dbReference type="GO" id="GO:0019863">
    <property type="term" value="F:IgE binding"/>
    <property type="evidence" value="ECO:0000314"/>
    <property type="project" value="UniProtKB"/>
</dbReference>
<dbReference type="GO" id="GO:0005178">
    <property type="term" value="F:integrin binding"/>
    <property type="evidence" value="ECO:0000304"/>
    <property type="project" value="ProtInc"/>
</dbReference>
<dbReference type="GO" id="GO:0019769">
    <property type="term" value="F:low-affinity IgE receptor activity"/>
    <property type="evidence" value="ECO:0000314"/>
    <property type="project" value="UniProtKB"/>
</dbReference>
<dbReference type="GO" id="GO:0046872">
    <property type="term" value="F:metal ion binding"/>
    <property type="evidence" value="ECO:0007669"/>
    <property type="project" value="UniProtKB-KW"/>
</dbReference>
<dbReference type="GO" id="GO:0038187">
    <property type="term" value="F:pattern recognition receptor activity"/>
    <property type="evidence" value="ECO:0000318"/>
    <property type="project" value="GO_Central"/>
</dbReference>
<dbReference type="GO" id="GO:0002020">
    <property type="term" value="F:protease binding"/>
    <property type="evidence" value="ECO:0000353"/>
    <property type="project" value="BHF-UCL"/>
</dbReference>
<dbReference type="GO" id="GO:0002450">
    <property type="term" value="P:B cell antigen processing and presentation"/>
    <property type="evidence" value="ECO:0000314"/>
    <property type="project" value="UniProtKB"/>
</dbReference>
<dbReference type="GO" id="GO:0042742">
    <property type="term" value="P:defense response to bacterium"/>
    <property type="evidence" value="ECO:0000314"/>
    <property type="project" value="BHF-UCL"/>
</dbReference>
<dbReference type="GO" id="GO:0160006">
    <property type="term" value="P:Fc receptor-mediated immune complex endocytosis"/>
    <property type="evidence" value="ECO:0000314"/>
    <property type="project" value="UniProtKB"/>
</dbReference>
<dbReference type="GO" id="GO:0038096">
    <property type="term" value="P:Fc-gamma receptor signaling pathway involved in phagocytosis"/>
    <property type="evidence" value="ECO:0000314"/>
    <property type="project" value="BHF-UCL"/>
</dbReference>
<dbReference type="GO" id="GO:0006955">
    <property type="term" value="P:immune response"/>
    <property type="evidence" value="ECO:0000318"/>
    <property type="project" value="GO_Central"/>
</dbReference>
<dbReference type="GO" id="GO:0042116">
    <property type="term" value="P:macrophage activation"/>
    <property type="evidence" value="ECO:0000314"/>
    <property type="project" value="UniProtKB"/>
</dbReference>
<dbReference type="GO" id="GO:0010628">
    <property type="term" value="P:positive regulation of gene expression"/>
    <property type="evidence" value="ECO:0000314"/>
    <property type="project" value="BHF-UCL"/>
</dbReference>
<dbReference type="GO" id="GO:0002925">
    <property type="term" value="P:positive regulation of humoral immune response mediated by circulating immunoglobulin"/>
    <property type="evidence" value="ECO:0007669"/>
    <property type="project" value="Ensembl"/>
</dbReference>
<dbReference type="CDD" id="cd03590">
    <property type="entry name" value="CLECT_DC-SIGN_like"/>
    <property type="match status" value="1"/>
</dbReference>
<dbReference type="DisProt" id="DP02975"/>
<dbReference type="FunFam" id="3.10.100.10:FF:000070">
    <property type="entry name" value="Low affinity immunoglobulin epsilon Fc receptor"/>
    <property type="match status" value="1"/>
</dbReference>
<dbReference type="Gene3D" id="3.10.100.10">
    <property type="entry name" value="Mannose-Binding Protein A, subunit A"/>
    <property type="match status" value="1"/>
</dbReference>
<dbReference type="InterPro" id="IPR001304">
    <property type="entry name" value="C-type_lectin-like"/>
</dbReference>
<dbReference type="InterPro" id="IPR016186">
    <property type="entry name" value="C-type_lectin-like/link_sf"/>
</dbReference>
<dbReference type="InterPro" id="IPR050111">
    <property type="entry name" value="C-type_lectin/snaclec_domain"/>
</dbReference>
<dbReference type="InterPro" id="IPR018378">
    <property type="entry name" value="C-type_lectin_CS"/>
</dbReference>
<dbReference type="InterPro" id="IPR033989">
    <property type="entry name" value="CD209-like_CTLD"/>
</dbReference>
<dbReference type="InterPro" id="IPR016187">
    <property type="entry name" value="CTDL_fold"/>
</dbReference>
<dbReference type="PANTHER" id="PTHR22803">
    <property type="entry name" value="MANNOSE, PHOSPHOLIPASE, LECTIN RECEPTOR RELATED"/>
    <property type="match status" value="1"/>
</dbReference>
<dbReference type="Pfam" id="PF00059">
    <property type="entry name" value="Lectin_C"/>
    <property type="match status" value="1"/>
</dbReference>
<dbReference type="SMART" id="SM00034">
    <property type="entry name" value="CLECT"/>
    <property type="match status" value="1"/>
</dbReference>
<dbReference type="SUPFAM" id="SSF56436">
    <property type="entry name" value="C-type lectin-like"/>
    <property type="match status" value="1"/>
</dbReference>
<dbReference type="PROSITE" id="PS00615">
    <property type="entry name" value="C_TYPE_LECTIN_1"/>
    <property type="match status" value="1"/>
</dbReference>
<dbReference type="PROSITE" id="PS50041">
    <property type="entry name" value="C_TYPE_LECTIN_2"/>
    <property type="match status" value="1"/>
</dbReference>